<name>PPR91_ARATH</name>
<proteinExistence type="inferred from homology"/>
<evidence type="ECO:0000255" key="1"/>
<evidence type="ECO:0000305" key="2"/>
<organism>
    <name type="scientific">Arabidopsis thaliana</name>
    <name type="common">Mouse-ear cress</name>
    <dbReference type="NCBI Taxonomy" id="3702"/>
    <lineage>
        <taxon>Eukaryota</taxon>
        <taxon>Viridiplantae</taxon>
        <taxon>Streptophyta</taxon>
        <taxon>Embryophyta</taxon>
        <taxon>Tracheophyta</taxon>
        <taxon>Spermatophyta</taxon>
        <taxon>Magnoliopsida</taxon>
        <taxon>eudicotyledons</taxon>
        <taxon>Gunneridae</taxon>
        <taxon>Pentapetalae</taxon>
        <taxon>rosids</taxon>
        <taxon>malvids</taxon>
        <taxon>Brassicales</taxon>
        <taxon>Brassicaceae</taxon>
        <taxon>Camelineae</taxon>
        <taxon>Arabidopsis</taxon>
    </lineage>
</organism>
<reference key="1">
    <citation type="journal article" date="2000" name="Nature">
        <title>Sequence and analysis of chromosome 1 of the plant Arabidopsis thaliana.</title>
        <authorList>
            <person name="Theologis A."/>
            <person name="Ecker J.R."/>
            <person name="Palm C.J."/>
            <person name="Federspiel N.A."/>
            <person name="Kaul S."/>
            <person name="White O."/>
            <person name="Alonso J."/>
            <person name="Altafi H."/>
            <person name="Araujo R."/>
            <person name="Bowman C.L."/>
            <person name="Brooks S.Y."/>
            <person name="Buehler E."/>
            <person name="Chan A."/>
            <person name="Chao Q."/>
            <person name="Chen H."/>
            <person name="Cheuk R.F."/>
            <person name="Chin C.W."/>
            <person name="Chung M.K."/>
            <person name="Conn L."/>
            <person name="Conway A.B."/>
            <person name="Conway A.R."/>
            <person name="Creasy T.H."/>
            <person name="Dewar K."/>
            <person name="Dunn P."/>
            <person name="Etgu P."/>
            <person name="Feldblyum T.V."/>
            <person name="Feng J.-D."/>
            <person name="Fong B."/>
            <person name="Fujii C.Y."/>
            <person name="Gill J.E."/>
            <person name="Goldsmith A.D."/>
            <person name="Haas B."/>
            <person name="Hansen N.F."/>
            <person name="Hughes B."/>
            <person name="Huizar L."/>
            <person name="Hunter J.L."/>
            <person name="Jenkins J."/>
            <person name="Johnson-Hopson C."/>
            <person name="Khan S."/>
            <person name="Khaykin E."/>
            <person name="Kim C.J."/>
            <person name="Koo H.L."/>
            <person name="Kremenetskaia I."/>
            <person name="Kurtz D.B."/>
            <person name="Kwan A."/>
            <person name="Lam B."/>
            <person name="Langin-Hooper S."/>
            <person name="Lee A."/>
            <person name="Lee J.M."/>
            <person name="Lenz C.A."/>
            <person name="Li J.H."/>
            <person name="Li Y.-P."/>
            <person name="Lin X."/>
            <person name="Liu S.X."/>
            <person name="Liu Z.A."/>
            <person name="Luros J.S."/>
            <person name="Maiti R."/>
            <person name="Marziali A."/>
            <person name="Militscher J."/>
            <person name="Miranda M."/>
            <person name="Nguyen M."/>
            <person name="Nierman W.C."/>
            <person name="Osborne B.I."/>
            <person name="Pai G."/>
            <person name="Peterson J."/>
            <person name="Pham P.K."/>
            <person name="Rizzo M."/>
            <person name="Rooney T."/>
            <person name="Rowley D."/>
            <person name="Sakano H."/>
            <person name="Salzberg S.L."/>
            <person name="Schwartz J.R."/>
            <person name="Shinn P."/>
            <person name="Southwick A.M."/>
            <person name="Sun H."/>
            <person name="Tallon L.J."/>
            <person name="Tambunga G."/>
            <person name="Toriumi M.J."/>
            <person name="Town C.D."/>
            <person name="Utterback T."/>
            <person name="Van Aken S."/>
            <person name="Vaysberg M."/>
            <person name="Vysotskaia V.S."/>
            <person name="Walker M."/>
            <person name="Wu D."/>
            <person name="Yu G."/>
            <person name="Fraser C.M."/>
            <person name="Venter J.C."/>
            <person name="Davis R.W."/>
        </authorList>
    </citation>
    <scope>NUCLEOTIDE SEQUENCE [LARGE SCALE GENOMIC DNA]</scope>
    <source>
        <strain>cv. Columbia</strain>
    </source>
</reference>
<reference key="2">
    <citation type="journal article" date="2017" name="Plant J.">
        <title>Araport11: a complete reannotation of the Arabidopsis thaliana reference genome.</title>
        <authorList>
            <person name="Cheng C.Y."/>
            <person name="Krishnakumar V."/>
            <person name="Chan A.P."/>
            <person name="Thibaud-Nissen F."/>
            <person name="Schobel S."/>
            <person name="Town C.D."/>
        </authorList>
    </citation>
    <scope>GENOME REANNOTATION</scope>
    <source>
        <strain>cv. Columbia</strain>
    </source>
</reference>
<reference key="3">
    <citation type="journal article" date="2004" name="Plant Cell">
        <title>Genome-wide analysis of Arabidopsis pentatricopeptide repeat proteins reveals their essential role in organelle biogenesis.</title>
        <authorList>
            <person name="Lurin C."/>
            <person name="Andres C."/>
            <person name="Aubourg S."/>
            <person name="Bellaoui M."/>
            <person name="Bitton F."/>
            <person name="Bruyere C."/>
            <person name="Caboche M."/>
            <person name="Debast C."/>
            <person name="Gualberto J."/>
            <person name="Hoffmann B."/>
            <person name="Lecharny A."/>
            <person name="Le Ret M."/>
            <person name="Martin-Magniette M.-L."/>
            <person name="Mireau H."/>
            <person name="Peeters N."/>
            <person name="Renou J.-P."/>
            <person name="Szurek B."/>
            <person name="Taconnat L."/>
            <person name="Small I."/>
        </authorList>
    </citation>
    <scope>GENE FAMILY</scope>
</reference>
<protein>
    <recommendedName>
        <fullName>Pentatricopeptide repeat-containing protein At1g62670, mitochondrial</fullName>
    </recommendedName>
</protein>
<gene>
    <name type="ordered locus">At1g62670</name>
    <name type="ORF">F23N19.4</name>
    <name type="ORF">T3P18.22</name>
</gene>
<feature type="transit peptide" description="Mitochondrion" evidence="1">
    <location>
        <begin position="1"/>
        <end position="22"/>
    </location>
</feature>
<feature type="chain" id="PRO_0000342832" description="Pentatricopeptide repeat-containing protein At1g62670, mitochondrial">
    <location>
        <begin position="23"/>
        <end position="630"/>
    </location>
</feature>
<feature type="repeat" description="PPR 1">
    <location>
        <begin position="44"/>
        <end position="79"/>
    </location>
</feature>
<feature type="repeat" description="PPR 2">
    <location>
        <begin position="80"/>
        <end position="114"/>
    </location>
</feature>
<feature type="repeat" description="PPR 3">
    <location>
        <begin position="115"/>
        <end position="149"/>
    </location>
</feature>
<feature type="repeat" description="PPR 4">
    <location>
        <begin position="150"/>
        <end position="184"/>
    </location>
</feature>
<feature type="repeat" description="PPR 5">
    <location>
        <begin position="185"/>
        <end position="219"/>
    </location>
</feature>
<feature type="repeat" description="PPR 6">
    <location>
        <begin position="220"/>
        <end position="254"/>
    </location>
</feature>
<feature type="repeat" description="PPR 7">
    <location>
        <begin position="255"/>
        <end position="289"/>
    </location>
</feature>
<feature type="repeat" description="PPR 8">
    <location>
        <begin position="290"/>
        <end position="324"/>
    </location>
</feature>
<feature type="repeat" description="PPR 9">
    <location>
        <begin position="325"/>
        <end position="359"/>
    </location>
</feature>
<feature type="repeat" description="PPR 10">
    <location>
        <begin position="360"/>
        <end position="394"/>
    </location>
</feature>
<feature type="repeat" description="PPR 11">
    <location>
        <begin position="395"/>
        <end position="429"/>
    </location>
</feature>
<feature type="repeat" description="PPR 12">
    <location>
        <begin position="430"/>
        <end position="464"/>
    </location>
</feature>
<feature type="repeat" description="PPR 13">
    <location>
        <begin position="465"/>
        <end position="499"/>
    </location>
</feature>
<feature type="repeat" description="PPR 14">
    <location>
        <begin position="500"/>
        <end position="534"/>
    </location>
</feature>
<feature type="repeat" description="PPR 15">
    <location>
        <begin position="535"/>
        <end position="569"/>
    </location>
</feature>
<feature type="repeat" description="PPR 16">
    <location>
        <begin position="570"/>
        <end position="604"/>
    </location>
</feature>
<dbReference type="EMBL" id="AC005698">
    <property type="protein sequence ID" value="AAD43623.1"/>
    <property type="status" value="ALT_INIT"/>
    <property type="molecule type" value="Genomic_DNA"/>
</dbReference>
<dbReference type="EMBL" id="AC007190">
    <property type="protein sequence ID" value="AAF19552.1"/>
    <property type="status" value="ALT_SEQ"/>
    <property type="molecule type" value="Genomic_DNA"/>
</dbReference>
<dbReference type="EMBL" id="CP002684">
    <property type="protein sequence ID" value="AEE33992.1"/>
    <property type="molecule type" value="Genomic_DNA"/>
</dbReference>
<dbReference type="EMBL" id="CP002684">
    <property type="protein sequence ID" value="ANM59187.1"/>
    <property type="molecule type" value="Genomic_DNA"/>
</dbReference>
<dbReference type="RefSeq" id="NP_001319294.1">
    <property type="nucleotide sequence ID" value="NM_001334047.1"/>
</dbReference>
<dbReference type="RefSeq" id="NP_176454.1">
    <property type="nucleotide sequence ID" value="NM_104944.1"/>
</dbReference>
<dbReference type="SMR" id="Q9SXD1"/>
<dbReference type="BioGRID" id="27785">
    <property type="interactions" value="1"/>
</dbReference>
<dbReference type="FunCoup" id="Q9SXD1">
    <property type="interactions" value="89"/>
</dbReference>
<dbReference type="STRING" id="3702.Q9SXD1"/>
<dbReference type="PaxDb" id="3702-AT1G62670.1"/>
<dbReference type="ProteomicsDB" id="225985"/>
<dbReference type="EnsemblPlants" id="AT1G62670.1">
    <property type="protein sequence ID" value="AT1G62670.1"/>
    <property type="gene ID" value="AT1G62670"/>
</dbReference>
<dbReference type="EnsemblPlants" id="AT1G62670.2">
    <property type="protein sequence ID" value="AT1G62670.2"/>
    <property type="gene ID" value="AT1G62670"/>
</dbReference>
<dbReference type="GeneID" id="842564"/>
<dbReference type="Gramene" id="AT1G62670.1">
    <property type="protein sequence ID" value="AT1G62670.1"/>
    <property type="gene ID" value="AT1G62670"/>
</dbReference>
<dbReference type="Gramene" id="AT1G62670.2">
    <property type="protein sequence ID" value="AT1G62670.2"/>
    <property type="gene ID" value="AT1G62670"/>
</dbReference>
<dbReference type="KEGG" id="ath:AT1G62670"/>
<dbReference type="Araport" id="AT1G62670"/>
<dbReference type="TAIR" id="AT1G62670">
    <property type="gene designation" value="RPF2"/>
</dbReference>
<dbReference type="eggNOG" id="KOG4197">
    <property type="taxonomic scope" value="Eukaryota"/>
</dbReference>
<dbReference type="HOGENOM" id="CLU_002706_49_12_1"/>
<dbReference type="InParanoid" id="Q9SXD1"/>
<dbReference type="OMA" id="CKQGHTQ"/>
<dbReference type="PhylomeDB" id="Q9SXD1"/>
<dbReference type="PRO" id="PR:Q9SXD1"/>
<dbReference type="Proteomes" id="UP000006548">
    <property type="component" value="Chromosome 1"/>
</dbReference>
<dbReference type="ExpressionAtlas" id="Q9SXD1">
    <property type="expression patterns" value="baseline and differential"/>
</dbReference>
<dbReference type="GO" id="GO:0005739">
    <property type="term" value="C:mitochondrion"/>
    <property type="evidence" value="ECO:0000314"/>
    <property type="project" value="TAIR"/>
</dbReference>
<dbReference type="GO" id="GO:0003723">
    <property type="term" value="F:RNA binding"/>
    <property type="evidence" value="ECO:0000314"/>
    <property type="project" value="TAIR"/>
</dbReference>
<dbReference type="GO" id="GO:0000966">
    <property type="term" value="P:RNA 5'-end processing"/>
    <property type="evidence" value="ECO:0000315"/>
    <property type="project" value="TAIR"/>
</dbReference>
<dbReference type="FunFam" id="1.25.40.10:FF:003300">
    <property type="entry name" value="Pentatricopeptide repeat-containing protein At1g62590"/>
    <property type="match status" value="1"/>
</dbReference>
<dbReference type="FunFam" id="1.25.40.10:FF:003431">
    <property type="entry name" value="Pentatricopeptide repeat-containing protein At1g62670, mitochondrial"/>
    <property type="match status" value="1"/>
</dbReference>
<dbReference type="FunFam" id="1.25.40.10:FF:000558">
    <property type="entry name" value="Pentatricopeptide repeat-containing protein At5g39710"/>
    <property type="match status" value="1"/>
</dbReference>
<dbReference type="Gene3D" id="1.25.40.10">
    <property type="entry name" value="Tetratricopeptide repeat domain"/>
    <property type="match status" value="6"/>
</dbReference>
<dbReference type="InterPro" id="IPR002885">
    <property type="entry name" value="Pentatricopeptide_rpt"/>
</dbReference>
<dbReference type="InterPro" id="IPR011990">
    <property type="entry name" value="TPR-like_helical_dom_sf"/>
</dbReference>
<dbReference type="NCBIfam" id="TIGR00756">
    <property type="entry name" value="PPR"/>
    <property type="match status" value="14"/>
</dbReference>
<dbReference type="PANTHER" id="PTHR47447">
    <property type="entry name" value="OS03G0856100 PROTEIN"/>
    <property type="match status" value="1"/>
</dbReference>
<dbReference type="PANTHER" id="PTHR47447:SF28">
    <property type="entry name" value="PENTACOTRIPEPTIDE-REPEAT REGION OF PRORP DOMAIN-CONTAINING PROTEIN"/>
    <property type="match status" value="1"/>
</dbReference>
<dbReference type="Pfam" id="PF13041">
    <property type="entry name" value="PPR_2"/>
    <property type="match status" value="7"/>
</dbReference>
<dbReference type="SUPFAM" id="SSF81901">
    <property type="entry name" value="HCP-like"/>
    <property type="match status" value="1"/>
</dbReference>
<dbReference type="PROSITE" id="PS51375">
    <property type="entry name" value="PPR"/>
    <property type="match status" value="16"/>
</dbReference>
<keyword id="KW-0496">Mitochondrion</keyword>
<keyword id="KW-1185">Reference proteome</keyword>
<keyword id="KW-0677">Repeat</keyword>
<keyword id="KW-0809">Transit peptide</keyword>
<accession>Q9SXD1</accession>
<accession>Q9SI82</accession>
<comment type="subcellular location">
    <subcellularLocation>
        <location evidence="2">Mitochondrion</location>
    </subcellularLocation>
</comment>
<comment type="similarity">
    <text evidence="2">Belongs to the PPR family. P subfamily.</text>
</comment>
<comment type="sequence caution" evidence="2">
    <conflict type="erroneous initiation">
        <sequence resource="EMBL-CDS" id="AAD43623"/>
    </conflict>
</comment>
<comment type="sequence caution" evidence="2">
    <conflict type="erroneous gene model prediction">
        <sequence resource="EMBL-CDS" id="AAF19552"/>
    </conflict>
    <text>The predicted gene has been split into 2 genes: At1g62670 and At1g62680.</text>
</comment>
<comment type="online information" name="Pentatricopeptide repeat proteins">
    <link uri="https://ppr.plantenergy.uwa.edu.au"/>
</comment>
<sequence length="630" mass="70846">MRISFAIASTAKRFVHRSLVVRGNAATVSPSFSFFWRRAFSGKTSYDYREKLSRNGLSELKLDDAVALFGEMVKSRPFPSIIEFSKLLSAIAKMNKFDVVISLGEQMQNLGIPHNHYTYSILINCFCRRSQLPLALAVLGKMMKLGYEPNIVTLSSLLNGYCHSKRISEAVALVDQMFVTGYQPNTVTFNTLIHGLFLHNKASEAMALIDRMVAKGCQPDLVTYGVVVNGLCKRGDTDLAFNLLNKMEQGKLEPGVLIYNTIIDGLCKYKHMDDALNLFKEMETKGIRPNVVTYSSLISCLCNYGRWSDASRLLSDMIERKINPDVFTFSALIDAFVKEGKLVEAEKLYDEMVKRSIDPSIVTYSSLINGFCMHDRLDEAKQMFEFMVSKHCFPDVVTYNTLIKGFCKYKRVEEGMEVFREMSQRGLVGNTVTYNILIQGLFQAGDCDMAQEIFKEMVSDGVPPNIMTYNTLLDGLCKNGKLEKAMVVFEYLQRSKMEPTIYTYNIMIEGMCKAGKVEDGWDLFCNLSLKGVKPDVVAYNTMISGFCRKGSKEEADALFKEMKEDGTLPNSGCYNTLIRARLRDGDREASAELIKEMRSCGFAGDASTIGLVTNMLHDGRLDKSFLDMLS</sequence>